<gene>
    <name type="primary">BRMS1</name>
</gene>
<comment type="function">
    <text evidence="1">Transcriptional repressor. Down-regulates transcription activation by NF-kappa-B by promoting the deacetylation of RELA at 'Lys-310'. Promotes HDAC1 binding to promoter regions. Down-regulates expression of anti-apoptotic genes that are controlled by NF-kappa-B. Promotes apoptosis in cells that have inadequate adherence to a substrate, a process called anoikis, and may thereby inhibit metastasis (By similarity).</text>
</comment>
<comment type="subunit">
    <text evidence="1">Interacts with SNX6, HDAC1 and RELA. Interacts with ARID4A. Identified in mSin3A corepressor complexes together with SIN3A, SIN3B, RBBP4, RBBP7, SAP30, SUDS3, ARID4A, HDAC1 and HDAC2 (By similarity).</text>
</comment>
<comment type="subcellular location">
    <subcellularLocation>
        <location evidence="1">Nucleus</location>
    </subcellularLocation>
    <subcellularLocation>
        <location evidence="1">Cytoplasm</location>
    </subcellularLocation>
    <text evidence="1">Predominantly nuclear.</text>
</comment>
<comment type="similarity">
    <text evidence="5">Belongs to the BRMS1 family.</text>
</comment>
<name>BRMS1_BOVIN</name>
<organism>
    <name type="scientific">Bos taurus</name>
    <name type="common">Bovine</name>
    <dbReference type="NCBI Taxonomy" id="9913"/>
    <lineage>
        <taxon>Eukaryota</taxon>
        <taxon>Metazoa</taxon>
        <taxon>Chordata</taxon>
        <taxon>Craniata</taxon>
        <taxon>Vertebrata</taxon>
        <taxon>Euteleostomi</taxon>
        <taxon>Mammalia</taxon>
        <taxon>Eutheria</taxon>
        <taxon>Laurasiatheria</taxon>
        <taxon>Artiodactyla</taxon>
        <taxon>Ruminantia</taxon>
        <taxon>Pecora</taxon>
        <taxon>Bovidae</taxon>
        <taxon>Bovinae</taxon>
        <taxon>Bos</taxon>
    </lineage>
</organism>
<sequence>MPVQPPSKDTEEMEAEGDSAAEMNGEEEESEEERSGSQTESEEESSEMDEEDCERRRSECVSEMMDLEKQFSELKEKLFRERLSQLRVRLEEVGAERAPEYTEPLGGLQRSLKIRIQVAGIYKGFCLDVIRNKYECELQGAKQHLESEKLLLYDTLQGELQERIQRLEEDRQSLDISSEWWDDKLHARGSSRTWDSLPPNKRKKAPLVSGPYIVYMLQEIDILEDWTAIKKARAAVSPQKRKSDGP</sequence>
<dbReference type="EMBL" id="BC116061">
    <property type="protein sequence ID" value="AAI16062.1"/>
    <property type="molecule type" value="mRNA"/>
</dbReference>
<dbReference type="RefSeq" id="NP_001069872.1">
    <property type="nucleotide sequence ID" value="NM_001076404.1"/>
</dbReference>
<dbReference type="SMR" id="Q1LZE0"/>
<dbReference type="FunCoup" id="Q1LZE0">
    <property type="interactions" value="2722"/>
</dbReference>
<dbReference type="STRING" id="9913.ENSBTAP00000023526"/>
<dbReference type="PaxDb" id="9913-ENSBTAP00000023526"/>
<dbReference type="GeneID" id="615952"/>
<dbReference type="KEGG" id="bta:615952"/>
<dbReference type="CTD" id="25855"/>
<dbReference type="VEuPathDB" id="HostDB:ENSBTAG00000017689"/>
<dbReference type="eggNOG" id="KOG4466">
    <property type="taxonomic scope" value="Eukaryota"/>
</dbReference>
<dbReference type="HOGENOM" id="CLU_050862_1_0_1"/>
<dbReference type="InParanoid" id="Q1LZE0"/>
<dbReference type="OMA" id="SEKHMAV"/>
<dbReference type="OrthoDB" id="20886at2759"/>
<dbReference type="TreeFam" id="TF323740"/>
<dbReference type="Reactome" id="R-BTA-3214815">
    <property type="pathway name" value="HDACs deacetylate histones"/>
</dbReference>
<dbReference type="Proteomes" id="UP000009136">
    <property type="component" value="Chromosome 29"/>
</dbReference>
<dbReference type="Bgee" id="ENSBTAG00000017689">
    <property type="expression patterns" value="Expressed in ruminant reticulum and 107 other cell types or tissues"/>
</dbReference>
<dbReference type="GO" id="GO:0005737">
    <property type="term" value="C:cytoplasm"/>
    <property type="evidence" value="ECO:0007669"/>
    <property type="project" value="UniProtKB-SubCell"/>
</dbReference>
<dbReference type="GO" id="GO:0005634">
    <property type="term" value="C:nucleus"/>
    <property type="evidence" value="ECO:0000250"/>
    <property type="project" value="UniProtKB"/>
</dbReference>
<dbReference type="GO" id="GO:0070822">
    <property type="term" value="C:Sin3-type complex"/>
    <property type="evidence" value="ECO:0000318"/>
    <property type="project" value="GO_Central"/>
</dbReference>
<dbReference type="GO" id="GO:0042826">
    <property type="term" value="F:histone deacetylase binding"/>
    <property type="evidence" value="ECO:0000318"/>
    <property type="project" value="GO_Central"/>
</dbReference>
<dbReference type="GO" id="GO:0006915">
    <property type="term" value="P:apoptotic process"/>
    <property type="evidence" value="ECO:0007669"/>
    <property type="project" value="UniProtKB-KW"/>
</dbReference>
<dbReference type="GO" id="GO:0045892">
    <property type="term" value="P:negative regulation of DNA-templated transcription"/>
    <property type="evidence" value="ECO:0000250"/>
    <property type="project" value="UniProtKB"/>
</dbReference>
<dbReference type="GO" id="GO:0032088">
    <property type="term" value="P:negative regulation of NF-kappaB transcription factor activity"/>
    <property type="evidence" value="ECO:0000250"/>
    <property type="project" value="UniProtKB"/>
</dbReference>
<dbReference type="GO" id="GO:0000122">
    <property type="term" value="P:negative regulation of transcription by RNA polymerase II"/>
    <property type="evidence" value="ECO:0000318"/>
    <property type="project" value="GO_Central"/>
</dbReference>
<dbReference type="GO" id="GO:2000210">
    <property type="term" value="P:positive regulation of anoikis"/>
    <property type="evidence" value="ECO:0000250"/>
    <property type="project" value="UniProtKB"/>
</dbReference>
<dbReference type="GO" id="GO:0090312">
    <property type="term" value="P:positive regulation of protein deacetylation"/>
    <property type="evidence" value="ECO:0000250"/>
    <property type="project" value="UniProtKB"/>
</dbReference>
<dbReference type="GO" id="GO:0042981">
    <property type="term" value="P:regulation of apoptotic process"/>
    <property type="evidence" value="ECO:0000250"/>
    <property type="project" value="UniProtKB"/>
</dbReference>
<dbReference type="FunFam" id="1.20.5.1500:FF:000002">
    <property type="entry name" value="breast cancer metastasis-suppressor 1-like protein-A"/>
    <property type="match status" value="1"/>
</dbReference>
<dbReference type="Gene3D" id="1.20.5.1500">
    <property type="match status" value="1"/>
</dbReference>
<dbReference type="InterPro" id="IPR013907">
    <property type="entry name" value="Sds3"/>
</dbReference>
<dbReference type="PANTHER" id="PTHR21964">
    <property type="entry name" value="BREAST CANCER METASTASIS-SUPPRESSOR 1"/>
    <property type="match status" value="1"/>
</dbReference>
<dbReference type="Pfam" id="PF08598">
    <property type="entry name" value="Sds3"/>
    <property type="match status" value="1"/>
</dbReference>
<dbReference type="SMART" id="SM01401">
    <property type="entry name" value="Sds3"/>
    <property type="match status" value="1"/>
</dbReference>
<accession>Q1LZE0</accession>
<evidence type="ECO:0000250" key="1"/>
<evidence type="ECO:0000250" key="2">
    <source>
        <dbReference type="UniProtKB" id="Q5PSV4"/>
    </source>
</evidence>
<evidence type="ECO:0000250" key="3">
    <source>
        <dbReference type="UniProtKB" id="Q9HCU9"/>
    </source>
</evidence>
<evidence type="ECO:0000256" key="4">
    <source>
        <dbReference type="SAM" id="MobiDB-lite"/>
    </source>
</evidence>
<evidence type="ECO:0000305" key="5"/>
<feature type="chain" id="PRO_0000305306" description="Breast cancer metastasis-suppressor 1 homolog">
    <location>
        <begin position="1"/>
        <end position="246"/>
    </location>
</feature>
<feature type="region of interest" description="Disordered" evidence="4">
    <location>
        <begin position="1"/>
        <end position="58"/>
    </location>
</feature>
<feature type="compositionally biased region" description="Acidic residues" evidence="4">
    <location>
        <begin position="11"/>
        <end position="32"/>
    </location>
</feature>
<feature type="compositionally biased region" description="Acidic residues" evidence="4">
    <location>
        <begin position="40"/>
        <end position="52"/>
    </location>
</feature>
<feature type="cross-link" description="Glycyl lysine isopeptide (Lys-Gly) (interchain with G-Cter in SUMO2)" evidence="3">
    <location>
        <position position="184"/>
    </location>
</feature>
<feature type="cross-link" description="Glycyl lysine isopeptide (Lys-Gly) (interchain with G-Cter in SUMO2)" evidence="2">
    <location>
        <position position="242"/>
    </location>
</feature>
<keyword id="KW-0053">Apoptosis</keyword>
<keyword id="KW-0963">Cytoplasm</keyword>
<keyword id="KW-1017">Isopeptide bond</keyword>
<keyword id="KW-0539">Nucleus</keyword>
<keyword id="KW-1185">Reference proteome</keyword>
<keyword id="KW-0678">Repressor</keyword>
<keyword id="KW-0804">Transcription</keyword>
<keyword id="KW-0805">Transcription regulation</keyword>
<keyword id="KW-0043">Tumor suppressor</keyword>
<keyword id="KW-0832">Ubl conjugation</keyword>
<protein>
    <recommendedName>
        <fullName>Breast cancer metastasis-suppressor 1 homolog</fullName>
    </recommendedName>
</protein>
<reference key="1">
    <citation type="submission" date="2006-05" db="EMBL/GenBank/DDBJ databases">
        <authorList>
            <consortium name="NIH - Mammalian Gene Collection (MGC) project"/>
        </authorList>
    </citation>
    <scope>NUCLEOTIDE SEQUENCE [LARGE SCALE MRNA]</scope>
    <source>
        <strain>Hereford</strain>
        <tissue>Ascending colon</tissue>
    </source>
</reference>
<proteinExistence type="evidence at transcript level"/>